<accession>Q5P9R1</accession>
<gene>
    <name evidence="1" type="primary">tilS</name>
    <name type="ordered locus">AM1117</name>
</gene>
<dbReference type="EC" id="6.3.4.19" evidence="1"/>
<dbReference type="EMBL" id="CP000030">
    <property type="protein sequence ID" value="AAV86969.1"/>
    <property type="status" value="ALT_INIT"/>
    <property type="molecule type" value="Genomic_DNA"/>
</dbReference>
<dbReference type="RefSeq" id="WP_237696945.1">
    <property type="nucleotide sequence ID" value="NC_004842.2"/>
</dbReference>
<dbReference type="SMR" id="Q5P9R1"/>
<dbReference type="KEGG" id="ama:AM1117"/>
<dbReference type="HOGENOM" id="CLU_018869_3_2_5"/>
<dbReference type="GO" id="GO:0005737">
    <property type="term" value="C:cytoplasm"/>
    <property type="evidence" value="ECO:0007669"/>
    <property type="project" value="UniProtKB-SubCell"/>
</dbReference>
<dbReference type="GO" id="GO:0005524">
    <property type="term" value="F:ATP binding"/>
    <property type="evidence" value="ECO:0007669"/>
    <property type="project" value="UniProtKB-UniRule"/>
</dbReference>
<dbReference type="GO" id="GO:0032267">
    <property type="term" value="F:tRNA(Ile)-lysidine synthase activity"/>
    <property type="evidence" value="ECO:0007669"/>
    <property type="project" value="UniProtKB-EC"/>
</dbReference>
<dbReference type="GO" id="GO:0006400">
    <property type="term" value="P:tRNA modification"/>
    <property type="evidence" value="ECO:0007669"/>
    <property type="project" value="UniProtKB-UniRule"/>
</dbReference>
<dbReference type="CDD" id="cd01992">
    <property type="entry name" value="TilS_N"/>
    <property type="match status" value="1"/>
</dbReference>
<dbReference type="Gene3D" id="3.40.50.620">
    <property type="entry name" value="HUPs"/>
    <property type="match status" value="1"/>
</dbReference>
<dbReference type="HAMAP" id="MF_01161">
    <property type="entry name" value="tRNA_Ile_lys_synt"/>
    <property type="match status" value="1"/>
</dbReference>
<dbReference type="InterPro" id="IPR014729">
    <property type="entry name" value="Rossmann-like_a/b/a_fold"/>
</dbReference>
<dbReference type="InterPro" id="IPR011063">
    <property type="entry name" value="TilS/TtcA_N"/>
</dbReference>
<dbReference type="InterPro" id="IPR012094">
    <property type="entry name" value="tRNA_Ile_lys_synt"/>
</dbReference>
<dbReference type="InterPro" id="IPR012795">
    <property type="entry name" value="tRNA_Ile_lys_synt_N"/>
</dbReference>
<dbReference type="NCBIfam" id="TIGR02432">
    <property type="entry name" value="lysidine_TilS_N"/>
    <property type="match status" value="1"/>
</dbReference>
<dbReference type="PANTHER" id="PTHR43033">
    <property type="entry name" value="TRNA(ILE)-LYSIDINE SYNTHASE-RELATED"/>
    <property type="match status" value="1"/>
</dbReference>
<dbReference type="PANTHER" id="PTHR43033:SF1">
    <property type="entry name" value="TRNA(ILE)-LYSIDINE SYNTHASE-RELATED"/>
    <property type="match status" value="1"/>
</dbReference>
<dbReference type="Pfam" id="PF01171">
    <property type="entry name" value="ATP_bind_3"/>
    <property type="match status" value="1"/>
</dbReference>
<dbReference type="SUPFAM" id="SSF52402">
    <property type="entry name" value="Adenine nucleotide alpha hydrolases-like"/>
    <property type="match status" value="1"/>
</dbReference>
<protein>
    <recommendedName>
        <fullName evidence="1">tRNA(Ile)-lysidine synthase</fullName>
        <ecNumber evidence="1">6.3.4.19</ecNumber>
    </recommendedName>
    <alternativeName>
        <fullName evidence="1">tRNA(Ile)-2-lysyl-cytidine synthase</fullName>
    </alternativeName>
    <alternativeName>
        <fullName evidence="1">tRNA(Ile)-lysidine synthetase</fullName>
    </alternativeName>
</protein>
<proteinExistence type="inferred from homology"/>
<sequence>MSGVRIPLFPRFIPHGTVKLESAALKKLNSLELSGGYAVAVSGGVDSITLLNLVAALHKTQATSRPVVLTGNHGFRAEADHETRFVQKRAVALGLDCEILRWNRHRTSSKSQETAREIRYSLLHQWCTEHSVKFLLTAHNKSDQAETVLMHLERGSGIDGLSGMHERSVFGDITIYRPLLGFTRQEILEYATQKQLSWVEDPSNQDPKYRRTFFRNLIAESKNPGVVVDRLCRTTSHMHRALACILHYVRSSLDYCLEFSPLGFITVKSQELRSVPEEIASRLLLLSLMAMGGKDHKPRYSAFWPILTKILQGQDFTPRTLHGCKVRKEPDGNFSIVRELARIETKIGVKTIAETIQWDRRFAIKIMCTHNASAAETTSCSAKHAPNPSEETQNLYITPLGNGSLPEHLVHVNRDVACSLPVLAHGDKVLAYPWQNHNIGVSPTISVEEVLVRRGVINLICHQLYR</sequence>
<organism>
    <name type="scientific">Anaplasma marginale (strain St. Maries)</name>
    <dbReference type="NCBI Taxonomy" id="234826"/>
    <lineage>
        <taxon>Bacteria</taxon>
        <taxon>Pseudomonadati</taxon>
        <taxon>Pseudomonadota</taxon>
        <taxon>Alphaproteobacteria</taxon>
        <taxon>Rickettsiales</taxon>
        <taxon>Anaplasmataceae</taxon>
        <taxon>Anaplasma</taxon>
    </lineage>
</organism>
<reference key="1">
    <citation type="journal article" date="2005" name="Proc. Natl. Acad. Sci. U.S.A.">
        <title>Complete genome sequencing of Anaplasma marginale reveals that the surface is skewed to two superfamilies of outer membrane proteins.</title>
        <authorList>
            <person name="Brayton K.A."/>
            <person name="Kappmeyer L.S."/>
            <person name="Herndon D.R."/>
            <person name="Dark M.J."/>
            <person name="Tibbals D.L."/>
            <person name="Palmer G.H."/>
            <person name="McGuire T.C."/>
            <person name="Knowles D.P. Jr."/>
        </authorList>
    </citation>
    <scope>NUCLEOTIDE SEQUENCE [LARGE SCALE GENOMIC DNA]</scope>
    <source>
        <strain>St. Maries</strain>
    </source>
</reference>
<name>TILS_ANAMM</name>
<keyword id="KW-0067">ATP-binding</keyword>
<keyword id="KW-0963">Cytoplasm</keyword>
<keyword id="KW-0436">Ligase</keyword>
<keyword id="KW-0547">Nucleotide-binding</keyword>
<keyword id="KW-0819">tRNA processing</keyword>
<comment type="function">
    <text evidence="1">Ligates lysine onto the cytidine present at position 34 of the AUA codon-specific tRNA(Ile) that contains the anticodon CAU, in an ATP-dependent manner. Cytidine is converted to lysidine, thus changing the amino acid specificity of the tRNA from methionine to isoleucine.</text>
</comment>
<comment type="catalytic activity">
    <reaction evidence="1">
        <text>cytidine(34) in tRNA(Ile2) + L-lysine + ATP = lysidine(34) in tRNA(Ile2) + AMP + diphosphate + H(+)</text>
        <dbReference type="Rhea" id="RHEA:43744"/>
        <dbReference type="Rhea" id="RHEA-COMP:10625"/>
        <dbReference type="Rhea" id="RHEA-COMP:10670"/>
        <dbReference type="ChEBI" id="CHEBI:15378"/>
        <dbReference type="ChEBI" id="CHEBI:30616"/>
        <dbReference type="ChEBI" id="CHEBI:32551"/>
        <dbReference type="ChEBI" id="CHEBI:33019"/>
        <dbReference type="ChEBI" id="CHEBI:82748"/>
        <dbReference type="ChEBI" id="CHEBI:83665"/>
        <dbReference type="ChEBI" id="CHEBI:456215"/>
        <dbReference type="EC" id="6.3.4.19"/>
    </reaction>
</comment>
<comment type="subcellular location">
    <subcellularLocation>
        <location evidence="1">Cytoplasm</location>
    </subcellularLocation>
</comment>
<comment type="domain">
    <text>The N-terminal region contains the highly conserved SGGXDS motif, predicted to be a P-loop motif involved in ATP binding.</text>
</comment>
<comment type="similarity">
    <text evidence="1">Belongs to the tRNA(Ile)-lysidine synthase family.</text>
</comment>
<comment type="sequence caution" evidence="2">
    <conflict type="erroneous initiation">
        <sequence resource="EMBL-CDS" id="AAV86969"/>
    </conflict>
</comment>
<evidence type="ECO:0000255" key="1">
    <source>
        <dbReference type="HAMAP-Rule" id="MF_01161"/>
    </source>
</evidence>
<evidence type="ECO:0000305" key="2"/>
<feature type="chain" id="PRO_0000181637" description="tRNA(Ile)-lysidine synthase">
    <location>
        <begin position="1"/>
        <end position="466"/>
    </location>
</feature>
<feature type="binding site" evidence="1">
    <location>
        <begin position="42"/>
        <end position="47"/>
    </location>
    <ligand>
        <name>ATP</name>
        <dbReference type="ChEBI" id="CHEBI:30616"/>
    </ligand>
</feature>